<reference key="1">
    <citation type="journal article" date="1993" name="Virus Res.">
        <title>Nucleotide sequence analysis of variola virus HindIII M, L, I genome fragments.</title>
        <authorList>
            <person name="Shchelkunov S.N."/>
            <person name="Blinov V.M."/>
            <person name="Totmenin A.V."/>
            <person name="Marennikova S.S."/>
            <person name="Kolykhalov A.A."/>
            <person name="Frolov I.V."/>
            <person name="Chizhikov V.E."/>
            <person name="Gytorov V.V."/>
            <person name="Gashikov P.V."/>
            <person name="Belanov E.F."/>
            <person name="Belavin P.A."/>
            <person name="Resenchuk S.M."/>
            <person name="Andzhaparidze O.G."/>
            <person name="Sandakhchiev L.S."/>
        </authorList>
    </citation>
    <scope>NUCLEOTIDE SEQUENCE [GENOMIC DNA]</scope>
</reference>
<reference key="2">
    <citation type="journal article" date="1993" name="FEBS Lett.">
        <title>Genes of variola and vaccinia viruses necessary to overcome the host protective mechanisms.</title>
        <authorList>
            <person name="Shchelkunov S.N."/>
            <person name="Blinov V.M."/>
            <person name="Sandakhchiev L.S."/>
        </authorList>
    </citation>
    <scope>NUCLEOTIDE SEQUENCE [LARGE SCALE GENOMIC DNA]</scope>
</reference>
<comment type="function">
    <text evidence="1">Late protein which is part of a large complex required for early virion morphogenesis. This complex participates in the formation of virosomes and the incorporation of virosomal contents into nascent immature virions (By similarity).</text>
</comment>
<comment type="subunit">
    <text evidence="1">Part of a complex composed of A30, G7, F10 kinase, A15, D2, D3, and J1.</text>
</comment>
<comment type="subcellular location">
    <subcellularLocation>
        <location evidence="1">Virion</location>
    </subcellularLocation>
    <text evidence="1">Localizes to the virion core.</text>
</comment>
<comment type="induction">
    <text>Expressed in the late phase of the viral replicative cycle.</text>
</comment>
<comment type="similarity">
    <text evidence="2">Belongs to the chordopoxvirinae D3 family.</text>
</comment>
<accession>P0DSQ9</accession>
<accession>P33068</accession>
<accession>Q76Q04</accession>
<evidence type="ECO:0000250" key="1"/>
<evidence type="ECO:0000305" key="2"/>
<organism>
    <name type="scientific">Variola virus (isolate Human/India/Ind3/1967)</name>
    <name type="common">VARV</name>
    <name type="synonym">Smallpox virus</name>
    <dbReference type="NCBI Taxonomy" id="587200"/>
    <lineage>
        <taxon>Viruses</taxon>
        <taxon>Varidnaviria</taxon>
        <taxon>Bamfordvirae</taxon>
        <taxon>Nucleocytoviricota</taxon>
        <taxon>Pokkesviricetes</taxon>
        <taxon>Chitovirales</taxon>
        <taxon>Poxviridae</taxon>
        <taxon>Chordopoxvirinae</taxon>
        <taxon>Orthopoxvirus</taxon>
        <taxon>Variola virus</taxon>
    </lineage>
</organism>
<gene>
    <name type="ORF">D3R</name>
</gene>
<protein>
    <recommendedName>
        <fullName>Core protein D3</fullName>
    </recommendedName>
    <alternativeName>
        <fullName>27 kDa virion core protein</fullName>
    </alternativeName>
</protein>
<name>D3_VAR67</name>
<proteinExistence type="evidence at transcript level"/>
<sequence length="237" mass="27996">MDIFIVKDNKYPKVDNDDNEVFILLGNHNDFIRSKLTKLKEHVFFSKYIVTPDTYGSLCVELNGSSFQHGGRYIEVEEFIDDGRQVRWCSTSNHISEDIPEDIHTNKFIIYDIYTFDSFKNKRLVFVQVPTSLGDDSYLTNPLLSPYYCNSVARQMVNDMIFNQDSFLKYLLEHLIRSHYRVSKHITIVRYKDTEELNLTRICYNRDKFKAFAFAWFNGVLENEKVLDTYKKVSDLI</sequence>
<dbReference type="EMBL" id="X67119">
    <property type="protein sequence ID" value="CAA47592.1"/>
    <property type="molecule type" value="Genomic_DNA"/>
</dbReference>
<dbReference type="EMBL" id="X69198">
    <property type="protein sequence ID" value="CAA49033.1"/>
    <property type="molecule type" value="Genomic_DNA"/>
</dbReference>
<dbReference type="PIR" id="S33107">
    <property type="entry name" value="S33107"/>
</dbReference>
<dbReference type="KEGG" id="vg:1486419"/>
<dbReference type="Proteomes" id="UP000002060">
    <property type="component" value="Segment"/>
</dbReference>
<dbReference type="GO" id="GO:0044423">
    <property type="term" value="C:virion component"/>
    <property type="evidence" value="ECO:0007669"/>
    <property type="project" value="UniProtKB-KW"/>
</dbReference>
<dbReference type="InterPro" id="IPR007660">
    <property type="entry name" value="Poxvirus_D3"/>
</dbReference>
<dbReference type="Pfam" id="PF04580">
    <property type="entry name" value="Pox_D3"/>
    <property type="match status" value="1"/>
</dbReference>
<feature type="chain" id="PRO_0000099431" description="Core protein D3">
    <location>
        <begin position="1"/>
        <end position="237"/>
    </location>
</feature>
<keyword id="KW-0426">Late protein</keyword>
<keyword id="KW-1185">Reference proteome</keyword>
<keyword id="KW-0946">Virion</keyword>
<organismHost>
    <name type="scientific">Homo sapiens</name>
    <name type="common">Human</name>
    <dbReference type="NCBI Taxonomy" id="9606"/>
</organismHost>